<gene>
    <name evidence="1" type="primary">rplJ</name>
    <name evidence="1" type="synonym">rpl10</name>
    <name type="ordered locus">MAE_43870</name>
</gene>
<feature type="chain" id="PRO_1000079549" description="Large ribosomal subunit protein uL10">
    <location>
        <begin position="1"/>
        <end position="182"/>
    </location>
</feature>
<dbReference type="EMBL" id="AP009552">
    <property type="protein sequence ID" value="BAG04209.1"/>
    <property type="molecule type" value="Genomic_DNA"/>
</dbReference>
<dbReference type="RefSeq" id="WP_008206397.1">
    <property type="nucleotide sequence ID" value="NC_010296.1"/>
</dbReference>
<dbReference type="SMR" id="B0JTA6"/>
<dbReference type="STRING" id="449447.MAE_43870"/>
<dbReference type="PaxDb" id="449447-MAE_43870"/>
<dbReference type="EnsemblBacteria" id="BAG04209">
    <property type="protein sequence ID" value="BAG04209"/>
    <property type="gene ID" value="MAE_43870"/>
</dbReference>
<dbReference type="KEGG" id="mar:MAE_43870"/>
<dbReference type="eggNOG" id="COG0244">
    <property type="taxonomic scope" value="Bacteria"/>
</dbReference>
<dbReference type="HOGENOM" id="CLU_092227_1_1_3"/>
<dbReference type="BioCyc" id="MAER449447:MAE_RS19005-MONOMER"/>
<dbReference type="Proteomes" id="UP000001510">
    <property type="component" value="Chromosome"/>
</dbReference>
<dbReference type="GO" id="GO:0015934">
    <property type="term" value="C:large ribosomal subunit"/>
    <property type="evidence" value="ECO:0007669"/>
    <property type="project" value="InterPro"/>
</dbReference>
<dbReference type="GO" id="GO:0070180">
    <property type="term" value="F:large ribosomal subunit rRNA binding"/>
    <property type="evidence" value="ECO:0007669"/>
    <property type="project" value="UniProtKB-UniRule"/>
</dbReference>
<dbReference type="GO" id="GO:0003735">
    <property type="term" value="F:structural constituent of ribosome"/>
    <property type="evidence" value="ECO:0007669"/>
    <property type="project" value="InterPro"/>
</dbReference>
<dbReference type="GO" id="GO:0006412">
    <property type="term" value="P:translation"/>
    <property type="evidence" value="ECO:0007669"/>
    <property type="project" value="UniProtKB-UniRule"/>
</dbReference>
<dbReference type="CDD" id="cd05797">
    <property type="entry name" value="Ribosomal_L10"/>
    <property type="match status" value="1"/>
</dbReference>
<dbReference type="Gene3D" id="3.30.70.1730">
    <property type="match status" value="1"/>
</dbReference>
<dbReference type="Gene3D" id="6.10.250.290">
    <property type="match status" value="1"/>
</dbReference>
<dbReference type="HAMAP" id="MF_00362">
    <property type="entry name" value="Ribosomal_uL10"/>
    <property type="match status" value="1"/>
</dbReference>
<dbReference type="InterPro" id="IPR001790">
    <property type="entry name" value="Ribosomal_uL10"/>
</dbReference>
<dbReference type="InterPro" id="IPR043141">
    <property type="entry name" value="Ribosomal_uL10-like_sf"/>
</dbReference>
<dbReference type="InterPro" id="IPR022973">
    <property type="entry name" value="Ribosomal_uL10_bac"/>
</dbReference>
<dbReference type="InterPro" id="IPR047865">
    <property type="entry name" value="Ribosomal_uL10_bac_type"/>
</dbReference>
<dbReference type="InterPro" id="IPR002363">
    <property type="entry name" value="Ribosomal_uL10_CS_bac"/>
</dbReference>
<dbReference type="NCBIfam" id="NF000955">
    <property type="entry name" value="PRK00099.1-1"/>
    <property type="match status" value="1"/>
</dbReference>
<dbReference type="PANTHER" id="PTHR11560">
    <property type="entry name" value="39S RIBOSOMAL PROTEIN L10, MITOCHONDRIAL"/>
    <property type="match status" value="1"/>
</dbReference>
<dbReference type="Pfam" id="PF00466">
    <property type="entry name" value="Ribosomal_L10"/>
    <property type="match status" value="1"/>
</dbReference>
<dbReference type="SUPFAM" id="SSF160369">
    <property type="entry name" value="Ribosomal protein L10-like"/>
    <property type="match status" value="1"/>
</dbReference>
<dbReference type="PROSITE" id="PS01109">
    <property type="entry name" value="RIBOSOMAL_L10"/>
    <property type="match status" value="1"/>
</dbReference>
<accession>B0JTA6</accession>
<name>RL10_MICAN</name>
<reference key="1">
    <citation type="journal article" date="2007" name="DNA Res.">
        <title>Complete genomic structure of the bloom-forming toxic cyanobacterium Microcystis aeruginosa NIES-843.</title>
        <authorList>
            <person name="Kaneko T."/>
            <person name="Nakajima N."/>
            <person name="Okamoto S."/>
            <person name="Suzuki I."/>
            <person name="Tanabe Y."/>
            <person name="Tamaoki M."/>
            <person name="Nakamura Y."/>
            <person name="Kasai F."/>
            <person name="Watanabe A."/>
            <person name="Kawashima K."/>
            <person name="Kishida Y."/>
            <person name="Ono A."/>
            <person name="Shimizu Y."/>
            <person name="Takahashi C."/>
            <person name="Minami C."/>
            <person name="Fujishiro T."/>
            <person name="Kohara M."/>
            <person name="Katoh M."/>
            <person name="Nakazaki N."/>
            <person name="Nakayama S."/>
            <person name="Yamada M."/>
            <person name="Tabata S."/>
            <person name="Watanabe M.M."/>
        </authorList>
    </citation>
    <scope>NUCLEOTIDE SEQUENCE [LARGE SCALE GENOMIC DNA]</scope>
    <source>
        <strain>NIES-843 / IAM M-247</strain>
    </source>
</reference>
<sequence length="182" mass="19645">MGRSRESKGVILEELKTSLSEAQLTMVIDYQGLTVAEISNLRRKLRPTGTICKVTKNTLMGLAIAEDSGWEPMKSLLSGTSAFLLVKEDIGGAFKAYQEFKKESKKTELRGGVLKEGTKGQLLTEEQLKAIADLPSKEQLIAQVAGAINAIATKLARSINEVPASLARAVDAVARQEEKEAA</sequence>
<organism>
    <name type="scientific">Microcystis aeruginosa (strain NIES-843 / IAM M-2473)</name>
    <dbReference type="NCBI Taxonomy" id="449447"/>
    <lineage>
        <taxon>Bacteria</taxon>
        <taxon>Bacillati</taxon>
        <taxon>Cyanobacteriota</taxon>
        <taxon>Cyanophyceae</taxon>
        <taxon>Oscillatoriophycideae</taxon>
        <taxon>Chroococcales</taxon>
        <taxon>Microcystaceae</taxon>
        <taxon>Microcystis</taxon>
    </lineage>
</organism>
<protein>
    <recommendedName>
        <fullName evidence="1">Large ribosomal subunit protein uL10</fullName>
    </recommendedName>
    <alternativeName>
        <fullName evidence="2">50S ribosomal protein L10</fullName>
    </alternativeName>
</protein>
<comment type="function">
    <text evidence="1">Forms part of the ribosomal stalk, playing a central role in the interaction of the ribosome with GTP-bound translation factors.</text>
</comment>
<comment type="subunit">
    <text evidence="1">Part of the ribosomal stalk of the 50S ribosomal subunit. The N-terminus interacts with L11 and the large rRNA to form the base of the stalk. The C-terminus forms an elongated spine to which L12 dimers bind in a sequential fashion forming a multimeric L10(L12)X complex.</text>
</comment>
<comment type="similarity">
    <text evidence="1">Belongs to the universal ribosomal protein uL10 family.</text>
</comment>
<evidence type="ECO:0000255" key="1">
    <source>
        <dbReference type="HAMAP-Rule" id="MF_00362"/>
    </source>
</evidence>
<evidence type="ECO:0000305" key="2"/>
<keyword id="KW-0687">Ribonucleoprotein</keyword>
<keyword id="KW-0689">Ribosomal protein</keyword>
<keyword id="KW-0694">RNA-binding</keyword>
<keyword id="KW-0699">rRNA-binding</keyword>
<proteinExistence type="inferred from homology"/>